<reference key="1">
    <citation type="journal article" date="2003" name="Nature">
        <title>Genome divergence in two Prochlorococcus ecotypes reflects oceanic niche differentiation.</title>
        <authorList>
            <person name="Rocap G."/>
            <person name="Larimer F.W."/>
            <person name="Lamerdin J.E."/>
            <person name="Malfatti S."/>
            <person name="Chain P."/>
            <person name="Ahlgren N.A."/>
            <person name="Arellano A."/>
            <person name="Coleman M."/>
            <person name="Hauser L."/>
            <person name="Hess W.R."/>
            <person name="Johnson Z.I."/>
            <person name="Land M.L."/>
            <person name="Lindell D."/>
            <person name="Post A.F."/>
            <person name="Regala W."/>
            <person name="Shah M."/>
            <person name="Shaw S.L."/>
            <person name="Steglich C."/>
            <person name="Sullivan M.B."/>
            <person name="Ting C.S."/>
            <person name="Tolonen A."/>
            <person name="Webb E.A."/>
            <person name="Zinser E.R."/>
            <person name="Chisholm S.W."/>
        </authorList>
    </citation>
    <scope>NUCLEOTIDE SEQUENCE [LARGE SCALE GENOMIC DNA]</scope>
    <source>
        <strain>CCMP1986 / NIES-2087 / MED4</strain>
    </source>
</reference>
<accession>Q7V2K9</accession>
<feature type="chain" id="PRO_0000170586" description="Guanylate kinase">
    <location>
        <begin position="1"/>
        <end position="184"/>
    </location>
</feature>
<feature type="domain" description="Guanylate kinase-like" evidence="1">
    <location>
        <begin position="5"/>
        <end position="183"/>
    </location>
</feature>
<feature type="binding site" evidence="1">
    <location>
        <begin position="12"/>
        <end position="19"/>
    </location>
    <ligand>
        <name>ATP</name>
        <dbReference type="ChEBI" id="CHEBI:30616"/>
    </ligand>
</feature>
<sequence>MKNLKKLIIITGPSGVGKGTVIKELLDRNKDIWLSISATTRNPRVGEKDDLNYYFIGEERFKDMIDKKEFLEWAQFAGNYYGTPLSTVNEKIEKGFIVLLEIEVEGAKQIKEKFPESLSIFLLPPSKEELEKRIRNRGTEKEEAIDRRLSRANYEIASSNQFDFVLTNHDVDETVKEVLKIIKS</sequence>
<protein>
    <recommendedName>
        <fullName evidence="1">Guanylate kinase</fullName>
        <ecNumber evidence="1">2.7.4.8</ecNumber>
    </recommendedName>
    <alternativeName>
        <fullName evidence="1">GMP kinase</fullName>
    </alternativeName>
</protein>
<keyword id="KW-0067">ATP-binding</keyword>
<keyword id="KW-0963">Cytoplasm</keyword>
<keyword id="KW-0418">Kinase</keyword>
<keyword id="KW-0547">Nucleotide-binding</keyword>
<keyword id="KW-0808">Transferase</keyword>
<organism>
    <name type="scientific">Prochlorococcus marinus subsp. pastoris (strain CCMP1986 / NIES-2087 / MED4)</name>
    <dbReference type="NCBI Taxonomy" id="59919"/>
    <lineage>
        <taxon>Bacteria</taxon>
        <taxon>Bacillati</taxon>
        <taxon>Cyanobacteriota</taxon>
        <taxon>Cyanophyceae</taxon>
        <taxon>Synechococcales</taxon>
        <taxon>Prochlorococcaceae</taxon>
        <taxon>Prochlorococcus</taxon>
    </lineage>
</organism>
<gene>
    <name evidence="1" type="primary">gmk</name>
    <name type="ordered locus">PMM0467</name>
</gene>
<comment type="function">
    <text evidence="1">Essential for recycling GMP and indirectly, cGMP.</text>
</comment>
<comment type="catalytic activity">
    <reaction evidence="1">
        <text>GMP + ATP = GDP + ADP</text>
        <dbReference type="Rhea" id="RHEA:20780"/>
        <dbReference type="ChEBI" id="CHEBI:30616"/>
        <dbReference type="ChEBI" id="CHEBI:58115"/>
        <dbReference type="ChEBI" id="CHEBI:58189"/>
        <dbReference type="ChEBI" id="CHEBI:456216"/>
        <dbReference type="EC" id="2.7.4.8"/>
    </reaction>
</comment>
<comment type="subcellular location">
    <subcellularLocation>
        <location evidence="1">Cytoplasm</location>
    </subcellularLocation>
</comment>
<comment type="similarity">
    <text evidence="1">Belongs to the guanylate kinase family.</text>
</comment>
<name>KGUA_PROMP</name>
<dbReference type="EC" id="2.7.4.8" evidence="1"/>
<dbReference type="EMBL" id="BX548174">
    <property type="protein sequence ID" value="CAE18926.1"/>
    <property type="molecule type" value="Genomic_DNA"/>
</dbReference>
<dbReference type="RefSeq" id="WP_011132103.1">
    <property type="nucleotide sequence ID" value="NC_005072.1"/>
</dbReference>
<dbReference type="SMR" id="Q7V2K9"/>
<dbReference type="STRING" id="59919.PMM0467"/>
<dbReference type="KEGG" id="pmm:PMM0467"/>
<dbReference type="eggNOG" id="COG0194">
    <property type="taxonomic scope" value="Bacteria"/>
</dbReference>
<dbReference type="HOGENOM" id="CLU_001715_1_1_3"/>
<dbReference type="OrthoDB" id="9808150at2"/>
<dbReference type="Proteomes" id="UP000001026">
    <property type="component" value="Chromosome"/>
</dbReference>
<dbReference type="GO" id="GO:0005829">
    <property type="term" value="C:cytosol"/>
    <property type="evidence" value="ECO:0007669"/>
    <property type="project" value="TreeGrafter"/>
</dbReference>
<dbReference type="GO" id="GO:0005524">
    <property type="term" value="F:ATP binding"/>
    <property type="evidence" value="ECO:0007669"/>
    <property type="project" value="UniProtKB-UniRule"/>
</dbReference>
<dbReference type="GO" id="GO:0004385">
    <property type="term" value="F:guanylate kinase activity"/>
    <property type="evidence" value="ECO:0007669"/>
    <property type="project" value="UniProtKB-UniRule"/>
</dbReference>
<dbReference type="CDD" id="cd00071">
    <property type="entry name" value="GMPK"/>
    <property type="match status" value="1"/>
</dbReference>
<dbReference type="FunFam" id="3.30.63.10:FF:000002">
    <property type="entry name" value="Guanylate kinase 1"/>
    <property type="match status" value="1"/>
</dbReference>
<dbReference type="Gene3D" id="3.30.63.10">
    <property type="entry name" value="Guanylate Kinase phosphate binding domain"/>
    <property type="match status" value="1"/>
</dbReference>
<dbReference type="Gene3D" id="3.40.50.300">
    <property type="entry name" value="P-loop containing nucleotide triphosphate hydrolases"/>
    <property type="match status" value="1"/>
</dbReference>
<dbReference type="HAMAP" id="MF_00328">
    <property type="entry name" value="Guanylate_kinase"/>
    <property type="match status" value="1"/>
</dbReference>
<dbReference type="InterPro" id="IPR008145">
    <property type="entry name" value="GK/Ca_channel_bsu"/>
</dbReference>
<dbReference type="InterPro" id="IPR008144">
    <property type="entry name" value="Guanylate_kin-like_dom"/>
</dbReference>
<dbReference type="InterPro" id="IPR017665">
    <property type="entry name" value="Guanylate_kinase"/>
</dbReference>
<dbReference type="InterPro" id="IPR027417">
    <property type="entry name" value="P-loop_NTPase"/>
</dbReference>
<dbReference type="NCBIfam" id="TIGR03263">
    <property type="entry name" value="guanyl_kin"/>
    <property type="match status" value="1"/>
</dbReference>
<dbReference type="PANTHER" id="PTHR23117:SF13">
    <property type="entry name" value="GUANYLATE KINASE"/>
    <property type="match status" value="1"/>
</dbReference>
<dbReference type="PANTHER" id="PTHR23117">
    <property type="entry name" value="GUANYLATE KINASE-RELATED"/>
    <property type="match status" value="1"/>
</dbReference>
<dbReference type="Pfam" id="PF00625">
    <property type="entry name" value="Guanylate_kin"/>
    <property type="match status" value="1"/>
</dbReference>
<dbReference type="SMART" id="SM00072">
    <property type="entry name" value="GuKc"/>
    <property type="match status" value="1"/>
</dbReference>
<dbReference type="SUPFAM" id="SSF52540">
    <property type="entry name" value="P-loop containing nucleoside triphosphate hydrolases"/>
    <property type="match status" value="1"/>
</dbReference>
<dbReference type="PROSITE" id="PS50052">
    <property type="entry name" value="GUANYLATE_KINASE_2"/>
    <property type="match status" value="1"/>
</dbReference>
<evidence type="ECO:0000255" key="1">
    <source>
        <dbReference type="HAMAP-Rule" id="MF_00328"/>
    </source>
</evidence>
<proteinExistence type="inferred from homology"/>